<protein>
    <recommendedName>
        <fullName>DNA recombination protein RmuC homolog</fullName>
    </recommendedName>
</protein>
<comment type="function">
    <text evidence="1">Involved in DNA recombination.</text>
</comment>
<comment type="similarity">
    <text evidence="3">Belongs to the RmuC family.</text>
</comment>
<gene>
    <name type="primary">rmuC</name>
    <name type="ordered locus">RT0684</name>
</gene>
<organism>
    <name type="scientific">Rickettsia typhi (strain ATCC VR-144 / Wilmington)</name>
    <dbReference type="NCBI Taxonomy" id="257363"/>
    <lineage>
        <taxon>Bacteria</taxon>
        <taxon>Pseudomonadati</taxon>
        <taxon>Pseudomonadota</taxon>
        <taxon>Alphaproteobacteria</taxon>
        <taxon>Rickettsiales</taxon>
        <taxon>Rickettsiaceae</taxon>
        <taxon>Rickettsieae</taxon>
        <taxon>Rickettsia</taxon>
        <taxon>typhus group</taxon>
    </lineage>
</organism>
<feature type="chain" id="PRO_0000286640" description="DNA recombination protein RmuC homolog">
    <location>
        <begin position="1"/>
        <end position="423"/>
    </location>
</feature>
<feature type="coiled-coil region" evidence="2">
    <location>
        <begin position="30"/>
        <end position="81"/>
    </location>
</feature>
<proteinExistence type="inferred from homology"/>
<sequence length="423" mass="48059">MPGLLLLTTTMLLILFALIICFYIKTKTFKMQLQFLSEQNLEINNNNQLLNQEKITYLQKIEQLKCKLEYQERMIKDSEKIREESFASAKAALFDLGKDLSKQLIEIHKMENNTTRELAEKNIETASQKFNTELERLITMVGALNKDIEQSKGTVDLIKQSLLSPIGAGLLSEITLENILKSSGLRPNLDFIMQYSLTTSDSVKLRPDAIIFLPSGNLMVIDSKASKFLVDSQDNSVHLSKTMNYHLKTLTNKDYAENILTNLNKKTQNFNNVITLMFLPTEQAVEKVIAANPEFLQKAWGCNIFPVGPAGLMNMLSFAKFQITDNRRSENYKVIIEEVRKLLSSIGTIADYSKKIGYNLQNMVTNYDKFAASFNRNVMSRVKSIQKLGIDSGNKIIPATLERYQIVSAKSEIIEVDVENQHK</sequence>
<keyword id="KW-0175">Coiled coil</keyword>
<keyword id="KW-0233">DNA recombination</keyword>
<name>RMUC_RICTY</name>
<dbReference type="EMBL" id="AE017197">
    <property type="protein sequence ID" value="AAU04144.1"/>
    <property type="molecule type" value="Genomic_DNA"/>
</dbReference>
<dbReference type="RefSeq" id="WP_011191121.1">
    <property type="nucleotide sequence ID" value="NC_006142.1"/>
</dbReference>
<dbReference type="SMR" id="Q68W48"/>
<dbReference type="KEGG" id="rty:RT0684"/>
<dbReference type="eggNOG" id="COG1322">
    <property type="taxonomic scope" value="Bacteria"/>
</dbReference>
<dbReference type="HOGENOM" id="CLU_640725_0_0_5"/>
<dbReference type="OrthoDB" id="370725at2"/>
<dbReference type="Proteomes" id="UP000000604">
    <property type="component" value="Chromosome"/>
</dbReference>
<dbReference type="GO" id="GO:0006310">
    <property type="term" value="P:DNA recombination"/>
    <property type="evidence" value="ECO:0007669"/>
    <property type="project" value="UniProtKB-KW"/>
</dbReference>
<dbReference type="InterPro" id="IPR003798">
    <property type="entry name" value="DNA_recombination_RmuC"/>
</dbReference>
<dbReference type="PANTHER" id="PTHR30563">
    <property type="entry name" value="DNA RECOMBINATION PROTEIN RMUC"/>
    <property type="match status" value="1"/>
</dbReference>
<dbReference type="PANTHER" id="PTHR30563:SF0">
    <property type="entry name" value="DNA RECOMBINATION PROTEIN RMUC"/>
    <property type="match status" value="1"/>
</dbReference>
<dbReference type="Pfam" id="PF02646">
    <property type="entry name" value="RmuC"/>
    <property type="match status" value="1"/>
</dbReference>
<reference key="1">
    <citation type="journal article" date="2004" name="J. Bacteriol.">
        <title>Complete genome sequence of Rickettsia typhi and comparison with sequences of other Rickettsiae.</title>
        <authorList>
            <person name="McLeod M.P."/>
            <person name="Qin X."/>
            <person name="Karpathy S.E."/>
            <person name="Gioia J."/>
            <person name="Highlander S.K."/>
            <person name="Fox G.E."/>
            <person name="McNeill T.Z."/>
            <person name="Jiang H."/>
            <person name="Muzny D."/>
            <person name="Jacob L.S."/>
            <person name="Hawes A.C."/>
            <person name="Sodergren E."/>
            <person name="Gill R."/>
            <person name="Hume J."/>
            <person name="Morgan M."/>
            <person name="Fan G."/>
            <person name="Amin A.G."/>
            <person name="Gibbs R.A."/>
            <person name="Hong C."/>
            <person name="Yu X.-J."/>
            <person name="Walker D.H."/>
            <person name="Weinstock G.M."/>
        </authorList>
    </citation>
    <scope>NUCLEOTIDE SEQUENCE [LARGE SCALE GENOMIC DNA]</scope>
    <source>
        <strain>ATCC VR-144 / Wilmington</strain>
    </source>
</reference>
<accession>Q68W48</accession>
<evidence type="ECO:0000250" key="1"/>
<evidence type="ECO:0000255" key="2"/>
<evidence type="ECO:0000305" key="3"/>